<organism>
    <name type="scientific">Drosophila erecta</name>
    <name type="common">Fruit fly</name>
    <dbReference type="NCBI Taxonomy" id="7220"/>
    <lineage>
        <taxon>Eukaryota</taxon>
        <taxon>Metazoa</taxon>
        <taxon>Ecdysozoa</taxon>
        <taxon>Arthropoda</taxon>
        <taxon>Hexapoda</taxon>
        <taxon>Insecta</taxon>
        <taxon>Pterygota</taxon>
        <taxon>Neoptera</taxon>
        <taxon>Endopterygota</taxon>
        <taxon>Diptera</taxon>
        <taxon>Brachycera</taxon>
        <taxon>Muscomorpha</taxon>
        <taxon>Ephydroidea</taxon>
        <taxon>Drosophilidae</taxon>
        <taxon>Drosophila</taxon>
        <taxon>Sophophora</taxon>
    </lineage>
</organism>
<feature type="chain" id="PRO_0000392415" description="Kinetochore protein Spc25">
    <location>
        <begin position="1"/>
        <end position="220"/>
    </location>
</feature>
<feature type="coiled-coil region" evidence="3">
    <location>
        <begin position="41"/>
        <end position="119"/>
    </location>
</feature>
<accession>Q64EW1</accession>
<evidence type="ECO:0000250" key="1">
    <source>
        <dbReference type="UniProtKB" id="Q9HBM1"/>
    </source>
</evidence>
<evidence type="ECO:0000250" key="2">
    <source>
        <dbReference type="UniProtKB" id="Q9V3V7"/>
    </source>
</evidence>
<evidence type="ECO:0000255" key="3"/>
<evidence type="ECO:0000312" key="4">
    <source>
        <dbReference type="EMBL" id="AAU15006.1"/>
    </source>
</evidence>
<evidence type="ECO:0000312" key="5">
    <source>
        <dbReference type="EMBL" id="EDV49300.1"/>
    </source>
</evidence>
<reference evidence="4" key="1">
    <citation type="journal article" date="2007" name="J. Cell Sci.">
        <title>Mitch a rapidly evolving component of the Ndc80 kinetochore complex required for correct chromosome segregation in Drosophila.</title>
        <authorList>
            <person name="Williams B."/>
            <person name="Leung G."/>
            <person name="Maiato H."/>
            <person name="Wong A."/>
            <person name="Li Z."/>
            <person name="Williams E.V."/>
            <person name="Kirkpatrick C."/>
            <person name="Aquadro C.F."/>
            <person name="Rieder C.L."/>
            <person name="Goldberg M.L."/>
        </authorList>
    </citation>
    <scope>NUCLEOTIDE SEQUENCE [GENOMIC DNA]</scope>
</reference>
<reference evidence="5" key="2">
    <citation type="journal article" date="2007" name="Nature">
        <title>Evolution of genes and genomes on the Drosophila phylogeny.</title>
        <authorList>
            <consortium name="Drosophila 12 genomes consortium"/>
        </authorList>
    </citation>
    <scope>NUCLEOTIDE SEQUENCE [LARGE SCALE GENOMIC DNA]</scope>
    <source>
        <strain evidence="5">Tucson 14021-0224.01</strain>
    </source>
</reference>
<name>SPC25_DROER</name>
<protein>
    <recommendedName>
        <fullName evidence="2">Kinetochore protein Spc25</fullName>
    </recommendedName>
</protein>
<keyword id="KW-0131">Cell cycle</keyword>
<keyword id="KW-0132">Cell division</keyword>
<keyword id="KW-0137">Centromere</keyword>
<keyword id="KW-0158">Chromosome</keyword>
<keyword id="KW-0175">Coiled coil</keyword>
<keyword id="KW-0995">Kinetochore</keyword>
<keyword id="KW-0469">Meiosis</keyword>
<keyword id="KW-0498">Mitosis</keyword>
<keyword id="KW-0539">Nucleus</keyword>
<gene>
    <name evidence="2" type="primary">Spc25</name>
    <name evidence="4" type="synonym">mitch</name>
    <name type="ORF">GG19269</name>
</gene>
<sequence>MAIIMAESSYERRVKALYEKQIRMETLEGKFIKKVFKFNSILLDVKEAAARHQRKVEKMQKVVIERREELEKRVSFMGQLAQEVEATKLRNLAMKDRIKQQKMLARERNNEIMERIHTLSKTTGTYVNQEALPARVKGVTVLRGDKRDQLIPFDLNATDAEGLNSLCQHLESLNVDVSQWQQLVSLVMDVTMEARAPTTPPKEAANCKSIIEIDLTSPTS</sequence>
<proteinExistence type="inferred from homology"/>
<comment type="function">
    <text evidence="1 2">Acts as a component of the essential kinetochore-associated Ndc80 complex, which is required for chromosome segregation and spindle checkpoint activity during meiosis and mitosis. Required for kinetochore integrity and the organization of stable microtubule binding sites in the outer plate of the kinetochore. Participates in SAC signaling that responds specifically to disruptions in spindle microtubule dynamics. The NDC80 complex synergistically enhances the affinity of the SKA1 complex for microtubules and may allow the NDC80 complex to track depolymerizing microtubules.</text>
</comment>
<comment type="subunit">
    <text evidence="2">Component of the Ndc80 complex, which is composed of Ndc80, Nuf2 and Spc25.</text>
</comment>
<comment type="subcellular location">
    <subcellularLocation>
        <location evidence="2">Nucleus</location>
    </subcellularLocation>
    <subcellularLocation>
        <location evidence="2">Chromosome</location>
        <location evidence="2">Centromere</location>
        <location evidence="2">Kinetochore</location>
    </subcellularLocation>
</comment>
<comment type="similarity">
    <text evidence="3">Belongs to the SPC25 family.</text>
</comment>
<dbReference type="EMBL" id="AY714312">
    <property type="protein sequence ID" value="AAU15006.1"/>
    <property type="molecule type" value="Genomic_DNA"/>
</dbReference>
<dbReference type="EMBL" id="CH954181">
    <property type="protein sequence ID" value="EDV49300.1"/>
    <property type="molecule type" value="Genomic_DNA"/>
</dbReference>
<dbReference type="SMR" id="Q64EW1"/>
<dbReference type="EnsemblMetazoa" id="FBtr0139323">
    <property type="protein sequence ID" value="FBpp0137815"/>
    <property type="gene ID" value="FBgn0082562"/>
</dbReference>
<dbReference type="EnsemblMetazoa" id="XM_001980306.3">
    <property type="protein sequence ID" value="XP_001980342.1"/>
    <property type="gene ID" value="LOC6553662"/>
</dbReference>
<dbReference type="GeneID" id="6553662"/>
<dbReference type="KEGG" id="der:6553662"/>
<dbReference type="eggNOG" id="ENOG502RVT8">
    <property type="taxonomic scope" value="Eukaryota"/>
</dbReference>
<dbReference type="HOGENOM" id="CLU_1246541_0_0_1"/>
<dbReference type="OMA" id="NELMECM"/>
<dbReference type="OrthoDB" id="8006210at2759"/>
<dbReference type="PhylomeDB" id="Q64EW1"/>
<dbReference type="Proteomes" id="UP000008711">
    <property type="component" value="Unassembled WGS sequence"/>
</dbReference>
<dbReference type="GO" id="GO:0031262">
    <property type="term" value="C:Ndc80 complex"/>
    <property type="evidence" value="ECO:0000250"/>
    <property type="project" value="UniProtKB"/>
</dbReference>
<dbReference type="GO" id="GO:0005634">
    <property type="term" value="C:nucleus"/>
    <property type="evidence" value="ECO:0007669"/>
    <property type="project" value="UniProtKB-SubCell"/>
</dbReference>
<dbReference type="GO" id="GO:0051301">
    <property type="term" value="P:cell division"/>
    <property type="evidence" value="ECO:0007669"/>
    <property type="project" value="UniProtKB-KW"/>
</dbReference>
<dbReference type="GO" id="GO:0051311">
    <property type="term" value="P:meiotic metaphase chromosome alignment"/>
    <property type="evidence" value="ECO:0000250"/>
    <property type="project" value="UniProtKB"/>
</dbReference>
<dbReference type="GO" id="GO:0000212">
    <property type="term" value="P:meiotic spindle organization"/>
    <property type="evidence" value="ECO:0000250"/>
    <property type="project" value="UniProtKB"/>
</dbReference>
<dbReference type="GO" id="GO:0007080">
    <property type="term" value="P:mitotic metaphase chromosome alignment"/>
    <property type="evidence" value="ECO:0000250"/>
    <property type="project" value="UniProtKB"/>
</dbReference>